<accession>P09120</accession>
<reference key="1">
    <citation type="journal article" date="1989" name="Mol. Microbiol.">
        <title>Molecular cloning and characterization of chromosomal virulence region kcpA of Shigella flexneri.</title>
        <authorList>
            <person name="Yamada M."/>
            <person name="Sasakawa C."/>
            <person name="Okada N."/>
            <person name="Makino S."/>
            <person name="Yoshikawa M."/>
        </authorList>
    </citation>
    <scope>NUCLEOTIDE SEQUENCE [GENOMIC DNA] OF 29-137</scope>
    <scope>FUNCTION</scope>
    <source>
        <strain>YSH6200 / Serotype 2a</strain>
    </source>
</reference>
<reference key="2">
    <citation type="journal article" date="1992" name="Mol. Microbiol.">
        <title>Temperature regulation of Shigella virulence: identification of the repressor gene virR, an analogue of hns, and partial complementation by tyrosyl transfer RNA (tRNA1(Tyr)).</title>
        <authorList>
            <person name="Hromockyj A.E."/>
            <person name="Tucker S.C."/>
            <person name="Maurelli A.T."/>
        </authorList>
    </citation>
    <scope>NUCLEOTIDE SEQUENCE [GENOMIC DNA]</scope>
    <scope>FUNCTION</scope>
    <source>
        <strain>ATCC 700930 / 2457T / Serotype 2a</strain>
    </source>
</reference>
<reference key="3">
    <citation type="journal article" date="2002" name="Nucleic Acids Res.">
        <title>Genome sequence of Shigella flexneri 2a: insights into pathogenicity through comparison with genomes of Escherichia coli K12 and O157.</title>
        <authorList>
            <person name="Jin Q."/>
            <person name="Yuan Z."/>
            <person name="Xu J."/>
            <person name="Wang Y."/>
            <person name="Shen Y."/>
            <person name="Lu W."/>
            <person name="Wang J."/>
            <person name="Liu H."/>
            <person name="Yang J."/>
            <person name="Yang F."/>
            <person name="Zhang X."/>
            <person name="Zhang J."/>
            <person name="Yang G."/>
            <person name="Wu H."/>
            <person name="Qu D."/>
            <person name="Dong J."/>
            <person name="Sun L."/>
            <person name="Xue Y."/>
            <person name="Zhao A."/>
            <person name="Gao Y."/>
            <person name="Zhu J."/>
            <person name="Kan B."/>
            <person name="Ding K."/>
            <person name="Chen S."/>
            <person name="Cheng H."/>
            <person name="Yao Z."/>
            <person name="He B."/>
            <person name="Chen R."/>
            <person name="Ma D."/>
            <person name="Qiang B."/>
            <person name="Wen Y."/>
            <person name="Hou Y."/>
            <person name="Yu J."/>
        </authorList>
    </citation>
    <scope>NUCLEOTIDE SEQUENCE [LARGE SCALE GENOMIC DNA]</scope>
    <source>
        <strain>301 / Serotype 2a</strain>
    </source>
</reference>
<reference key="4">
    <citation type="journal article" date="2003" name="Infect. Immun.">
        <title>Complete genome sequence and comparative genomics of Shigella flexneri serotype 2a strain 2457T.</title>
        <authorList>
            <person name="Wei J."/>
            <person name="Goldberg M.B."/>
            <person name="Burland V."/>
            <person name="Venkatesan M.M."/>
            <person name="Deng W."/>
            <person name="Fournier G."/>
            <person name="Mayhew G.F."/>
            <person name="Plunkett G. III"/>
            <person name="Rose D.J."/>
            <person name="Darling A."/>
            <person name="Mau B."/>
            <person name="Perna N.T."/>
            <person name="Payne S.M."/>
            <person name="Runyen-Janecky L.J."/>
            <person name="Zhou S."/>
            <person name="Schwartz D.C."/>
            <person name="Blattner F.R."/>
        </authorList>
    </citation>
    <scope>NUCLEOTIDE SEQUENCE [LARGE SCALE GENOMIC DNA]</scope>
    <source>
        <strain>ATCC 700930 / 2457T / Serotype 2a</strain>
    </source>
</reference>
<dbReference type="EMBL" id="X66848">
    <property type="protein sequence ID" value="CAA47322.1"/>
    <property type="molecule type" value="Genomic_DNA"/>
</dbReference>
<dbReference type="EMBL" id="X13131">
    <property type="protein sequence ID" value="CAA31522.1"/>
    <property type="molecule type" value="Genomic_DNA"/>
</dbReference>
<dbReference type="EMBL" id="AE005674">
    <property type="protein sequence ID" value="AAN42850.1"/>
    <property type="molecule type" value="Genomic_DNA"/>
</dbReference>
<dbReference type="EMBL" id="AE014073">
    <property type="protein sequence ID" value="AAP16735.1"/>
    <property type="molecule type" value="Genomic_DNA"/>
</dbReference>
<dbReference type="PIR" id="S24755">
    <property type="entry name" value="S24755"/>
</dbReference>
<dbReference type="RefSeq" id="NP_707143.1">
    <property type="nucleotide sequence ID" value="NC_004337.2"/>
</dbReference>
<dbReference type="RefSeq" id="WP_001287378.1">
    <property type="nucleotide sequence ID" value="NZ_WPGW01000029.1"/>
</dbReference>
<dbReference type="BMRB" id="P09120"/>
<dbReference type="SMR" id="P09120"/>
<dbReference type="IntAct" id="P09120">
    <property type="interactions" value="2"/>
</dbReference>
<dbReference type="STRING" id="198214.SF1237"/>
<dbReference type="CARD" id="ARO:3000676">
    <property type="molecule name" value="H-NS"/>
    <property type="mechanism identifier" value="ARO:0010000"/>
    <property type="mechanism name" value="antibiotic efflux"/>
</dbReference>
<dbReference type="PaxDb" id="198214-SF1237"/>
<dbReference type="GeneID" id="1023363"/>
<dbReference type="GeneID" id="93775303"/>
<dbReference type="KEGG" id="sfl:SF1237"/>
<dbReference type="KEGG" id="sfx:S1323"/>
<dbReference type="PATRIC" id="fig|198214.7.peg.1455"/>
<dbReference type="HOGENOM" id="CLU_117503_0_0_6"/>
<dbReference type="Proteomes" id="UP000001006">
    <property type="component" value="Chromosome"/>
</dbReference>
<dbReference type="Proteomes" id="UP000002673">
    <property type="component" value="Chromosome"/>
</dbReference>
<dbReference type="GO" id="GO:0005829">
    <property type="term" value="C:cytosol"/>
    <property type="evidence" value="ECO:0007669"/>
    <property type="project" value="TreeGrafter"/>
</dbReference>
<dbReference type="GO" id="GO:0009295">
    <property type="term" value="C:nucleoid"/>
    <property type="evidence" value="ECO:0007669"/>
    <property type="project" value="UniProtKB-SubCell"/>
</dbReference>
<dbReference type="GO" id="GO:0032993">
    <property type="term" value="C:protein-DNA complex"/>
    <property type="evidence" value="ECO:0007669"/>
    <property type="project" value="TreeGrafter"/>
</dbReference>
<dbReference type="GO" id="GO:0003681">
    <property type="term" value="F:bent DNA binding"/>
    <property type="evidence" value="ECO:0007669"/>
    <property type="project" value="TreeGrafter"/>
</dbReference>
<dbReference type="GO" id="GO:0001217">
    <property type="term" value="F:DNA-binding transcription repressor activity"/>
    <property type="evidence" value="ECO:0007669"/>
    <property type="project" value="TreeGrafter"/>
</dbReference>
<dbReference type="GO" id="GO:0042802">
    <property type="term" value="F:identical protein binding"/>
    <property type="evidence" value="ECO:0000353"/>
    <property type="project" value="IntAct"/>
</dbReference>
<dbReference type="GO" id="GO:0003680">
    <property type="term" value="F:minor groove of adenine-thymine-rich DNA binding"/>
    <property type="evidence" value="ECO:0007669"/>
    <property type="project" value="TreeGrafter"/>
</dbReference>
<dbReference type="GO" id="GO:0046983">
    <property type="term" value="F:protein dimerization activity"/>
    <property type="evidence" value="ECO:0007669"/>
    <property type="project" value="InterPro"/>
</dbReference>
<dbReference type="GO" id="GO:0030527">
    <property type="term" value="F:structural constituent of chromatin"/>
    <property type="evidence" value="ECO:0007669"/>
    <property type="project" value="InterPro"/>
</dbReference>
<dbReference type="GO" id="GO:0000976">
    <property type="term" value="F:transcription cis-regulatory region binding"/>
    <property type="evidence" value="ECO:0007669"/>
    <property type="project" value="TreeGrafter"/>
</dbReference>
<dbReference type="FunFam" id="1.10.287.1050:FF:000001">
    <property type="entry name" value="DNA-binding protein"/>
    <property type="match status" value="1"/>
</dbReference>
<dbReference type="FunFam" id="4.10.430.10:FF:000001">
    <property type="entry name" value="DNA-binding protein"/>
    <property type="match status" value="1"/>
</dbReference>
<dbReference type="Gene3D" id="1.10.287.1050">
    <property type="entry name" value="H-NS histone-like proteins"/>
    <property type="match status" value="1"/>
</dbReference>
<dbReference type="Gene3D" id="4.10.430.10">
    <property type="entry name" value="Histone-like protein H-NS, C-terminal domain"/>
    <property type="match status" value="1"/>
</dbReference>
<dbReference type="InterPro" id="IPR054180">
    <property type="entry name" value="H-NS-like_N"/>
</dbReference>
<dbReference type="InterPro" id="IPR027444">
    <property type="entry name" value="H-NS_C_dom"/>
</dbReference>
<dbReference type="InterPro" id="IPR037150">
    <property type="entry name" value="H-NS_C_dom_sf"/>
</dbReference>
<dbReference type="InterPro" id="IPR001801">
    <property type="entry name" value="Histone_HNS"/>
</dbReference>
<dbReference type="InterPro" id="IPR027454">
    <property type="entry name" value="Histone_HNS_N"/>
</dbReference>
<dbReference type="NCBIfam" id="NF008193">
    <property type="entry name" value="PRK10947.1"/>
    <property type="match status" value="1"/>
</dbReference>
<dbReference type="PANTHER" id="PTHR38097">
    <property type="match status" value="1"/>
</dbReference>
<dbReference type="PANTHER" id="PTHR38097:SF1">
    <property type="entry name" value="DNA-BINDING PROTEIN H-NS"/>
    <property type="match status" value="1"/>
</dbReference>
<dbReference type="Pfam" id="PF00816">
    <property type="entry name" value="Histone_HNS"/>
    <property type="match status" value="1"/>
</dbReference>
<dbReference type="Pfam" id="PF22470">
    <property type="entry name" value="Histone_HNS_N"/>
    <property type="match status" value="1"/>
</dbReference>
<dbReference type="PIRSF" id="PIRSF002096">
    <property type="entry name" value="HnS"/>
    <property type="match status" value="1"/>
</dbReference>
<dbReference type="SMART" id="SM00528">
    <property type="entry name" value="HNS"/>
    <property type="match status" value="1"/>
</dbReference>
<dbReference type="SUPFAM" id="SSF81273">
    <property type="entry name" value="H-NS histone-like proteins"/>
    <property type="match status" value="2"/>
</dbReference>
<sequence>MSEALKILNNIRTLRAQARECTLETLEEMLEKLEVVVNERREEESAAAAEVEERTRKLQQYREMLIADGIDPNELLNSLAAVKSGTKAKRAQRPAKYSYVDENGETKTWTGQGRTPAVIKKAMDEQGKSLDDFLIKQ</sequence>
<keyword id="KW-0963">Cytoplasm</keyword>
<keyword id="KW-0238">DNA-binding</keyword>
<keyword id="KW-1185">Reference proteome</keyword>
<keyword id="KW-0678">Repressor</keyword>
<keyword id="KW-0804">Transcription</keyword>
<keyword id="KW-0805">Transcription regulation</keyword>
<keyword id="KW-0843">Virulence</keyword>
<gene>
    <name type="primary">hns</name>
    <name type="synonym">hnsA</name>
    <name evidence="7" type="synonym">kcpA</name>
    <name evidence="6" type="synonym">virR</name>
    <name type="ordered locus">SF1237</name>
    <name type="ordered locus">S1323</name>
</gene>
<evidence type="ECO:0000250" key="1"/>
<evidence type="ECO:0000250" key="2">
    <source>
        <dbReference type="UniProtKB" id="P0A1S2"/>
    </source>
</evidence>
<evidence type="ECO:0000250" key="3">
    <source>
        <dbReference type="UniProtKB" id="P0ACF8"/>
    </source>
</evidence>
<evidence type="ECO:0000269" key="4">
    <source>
    </source>
</evidence>
<evidence type="ECO:0000269" key="5">
    <source>
    </source>
</evidence>
<evidence type="ECO:0000303" key="6">
    <source>
    </source>
</evidence>
<evidence type="ECO:0000303" key="7">
    <source>
    </source>
</evidence>
<evidence type="ECO:0000305" key="8"/>
<protein>
    <recommendedName>
        <fullName>DNA-binding protein H-NS</fullName>
    </recommendedName>
    <alternativeName>
        <fullName>Pathogenesis protein KcpA</fullName>
    </alternativeName>
</protein>
<name>HNS_SHIFL</name>
<proteinExistence type="evidence at protein level"/>
<feature type="initiator methionine" description="Removed" evidence="1">
    <location>
        <position position="1"/>
    </location>
</feature>
<feature type="chain" id="PRO_0000168512" description="DNA-binding protein H-NS">
    <location>
        <begin position="2"/>
        <end position="137"/>
    </location>
</feature>
<feature type="DNA-binding region" evidence="2">
    <location>
        <begin position="112"/>
        <end position="117"/>
    </location>
</feature>
<comment type="function">
    <text evidence="3">A DNA-binding protein implicated in transcriptional repression and chromosome organization and compaction. Binds nucleation sites in AT-rich DNA and bridges them, forming higher-order nucleoprotein complexes and condensing the chromosome. As many horizontally transferred genes are AT-rich, it plays a central role in silencing foreign genes. A subset of genes are repressed by H-NS in association with other proteins (By similarity).</text>
</comment>
<comment type="function">
    <text evidence="4 5">KcpA is involved in pathogenesis. The protein is required by invading bacteria for spread into adjacent cells (colonic epithelial cells). It is needed to establish kerato-conjunctivitis provocation (KCP) by pathogenic bacteria (PubMed:2668687). It is involved in the thermal control of epithelial cell invasion (PubMed:1406252).</text>
</comment>
<comment type="subunit">
    <text evidence="3">Homodimer that oligomerizes on DNA into higher-order complexes that form bridges between disparate regions of DNA compacting it. Interacts with Hha, Cnu and StpA.</text>
</comment>
<comment type="interaction">
    <interactant intactId="EBI-2011657">
        <id>P09120</id>
    </interactant>
    <interactant intactId="EBI-2011657">
        <id>P09120</id>
        <label>hns</label>
    </interactant>
    <organismsDiffer>false</organismsDiffer>
    <experiments>2</experiments>
</comment>
<comment type="subcellular location">
    <subcellularLocation>
        <location evidence="3">Cytoplasm</location>
        <location evidence="3">Nucleoid</location>
    </subcellularLocation>
</comment>
<comment type="similarity">
    <text evidence="8">Belongs to the histone-like protein H-NS family.</text>
</comment>
<organism>
    <name type="scientific">Shigella flexneri</name>
    <dbReference type="NCBI Taxonomy" id="623"/>
    <lineage>
        <taxon>Bacteria</taxon>
        <taxon>Pseudomonadati</taxon>
        <taxon>Pseudomonadota</taxon>
        <taxon>Gammaproteobacteria</taxon>
        <taxon>Enterobacterales</taxon>
        <taxon>Enterobacteriaceae</taxon>
        <taxon>Shigella</taxon>
    </lineage>
</organism>